<evidence type="ECO:0000255" key="1">
    <source>
        <dbReference type="HAMAP-Rule" id="MF_00530"/>
    </source>
</evidence>
<feature type="chain" id="PRO_1000056533" description="ATP synthase epsilon chain">
    <location>
        <begin position="1"/>
        <end position="142"/>
    </location>
</feature>
<gene>
    <name evidence="1" type="primary">atpC</name>
    <name type="ordered locus">Sputcn32_3955</name>
</gene>
<comment type="function">
    <text evidence="1">Produces ATP from ADP in the presence of a proton gradient across the membrane.</text>
</comment>
<comment type="subunit">
    <text evidence="1">F-type ATPases have 2 components, CF(1) - the catalytic core - and CF(0) - the membrane proton channel. CF(1) has five subunits: alpha(3), beta(3), gamma(1), delta(1), epsilon(1). CF(0) has three main subunits: a, b and c.</text>
</comment>
<comment type="subcellular location">
    <subcellularLocation>
        <location evidence="1">Cell inner membrane</location>
        <topology evidence="1">Peripheral membrane protein</topology>
    </subcellularLocation>
</comment>
<comment type="similarity">
    <text evidence="1">Belongs to the ATPase epsilon chain family.</text>
</comment>
<reference key="1">
    <citation type="submission" date="2007-04" db="EMBL/GenBank/DDBJ databases">
        <title>Complete sequence of Shewanella putrefaciens CN-32.</title>
        <authorList>
            <consortium name="US DOE Joint Genome Institute"/>
            <person name="Copeland A."/>
            <person name="Lucas S."/>
            <person name="Lapidus A."/>
            <person name="Barry K."/>
            <person name="Detter J.C."/>
            <person name="Glavina del Rio T."/>
            <person name="Hammon N."/>
            <person name="Israni S."/>
            <person name="Dalin E."/>
            <person name="Tice H."/>
            <person name="Pitluck S."/>
            <person name="Chain P."/>
            <person name="Malfatti S."/>
            <person name="Shin M."/>
            <person name="Vergez L."/>
            <person name="Schmutz J."/>
            <person name="Larimer F."/>
            <person name="Land M."/>
            <person name="Hauser L."/>
            <person name="Kyrpides N."/>
            <person name="Mikhailova N."/>
            <person name="Romine M.F."/>
            <person name="Fredrickson J."/>
            <person name="Tiedje J."/>
            <person name="Richardson P."/>
        </authorList>
    </citation>
    <scope>NUCLEOTIDE SEQUENCE [LARGE SCALE GENOMIC DNA]</scope>
    <source>
        <strain>CN-32 / ATCC BAA-453</strain>
    </source>
</reference>
<protein>
    <recommendedName>
        <fullName evidence="1">ATP synthase epsilon chain</fullName>
    </recommendedName>
    <alternativeName>
        <fullName evidence="1">ATP synthase F1 sector epsilon subunit</fullName>
    </alternativeName>
    <alternativeName>
        <fullName evidence="1">F-ATPase epsilon subunit</fullName>
    </alternativeName>
</protein>
<sequence>MAAMTVHLDIVSAENSIFKGRVACLQVTGVEGELGILPGHAPLLTTIKPGMARIIKQDGSEEVIYLSGGFLEVQPNSIAVLADVVMRADEIDEQAALEAKRRAEAHMADAGADFDYDAAMVELAKAMAQLRVVETIKKNIAR</sequence>
<proteinExistence type="inferred from homology"/>
<accession>A4YCH7</accession>
<organism>
    <name type="scientific">Shewanella putrefaciens (strain CN-32 / ATCC BAA-453)</name>
    <dbReference type="NCBI Taxonomy" id="319224"/>
    <lineage>
        <taxon>Bacteria</taxon>
        <taxon>Pseudomonadati</taxon>
        <taxon>Pseudomonadota</taxon>
        <taxon>Gammaproteobacteria</taxon>
        <taxon>Alteromonadales</taxon>
        <taxon>Shewanellaceae</taxon>
        <taxon>Shewanella</taxon>
    </lineage>
</organism>
<dbReference type="EMBL" id="CP000681">
    <property type="protein sequence ID" value="ABP77660.1"/>
    <property type="molecule type" value="Genomic_DNA"/>
</dbReference>
<dbReference type="SMR" id="A4YCH7"/>
<dbReference type="STRING" id="319224.Sputcn32_3955"/>
<dbReference type="KEGG" id="spc:Sputcn32_3955"/>
<dbReference type="eggNOG" id="COG0355">
    <property type="taxonomic scope" value="Bacteria"/>
</dbReference>
<dbReference type="HOGENOM" id="CLU_084338_2_0_6"/>
<dbReference type="GO" id="GO:0005886">
    <property type="term" value="C:plasma membrane"/>
    <property type="evidence" value="ECO:0007669"/>
    <property type="project" value="UniProtKB-SubCell"/>
</dbReference>
<dbReference type="GO" id="GO:0045259">
    <property type="term" value="C:proton-transporting ATP synthase complex"/>
    <property type="evidence" value="ECO:0007669"/>
    <property type="project" value="UniProtKB-KW"/>
</dbReference>
<dbReference type="GO" id="GO:0005524">
    <property type="term" value="F:ATP binding"/>
    <property type="evidence" value="ECO:0007669"/>
    <property type="project" value="UniProtKB-UniRule"/>
</dbReference>
<dbReference type="GO" id="GO:0046933">
    <property type="term" value="F:proton-transporting ATP synthase activity, rotational mechanism"/>
    <property type="evidence" value="ECO:0007669"/>
    <property type="project" value="UniProtKB-UniRule"/>
</dbReference>
<dbReference type="CDD" id="cd12152">
    <property type="entry name" value="F1-ATPase_delta"/>
    <property type="match status" value="1"/>
</dbReference>
<dbReference type="FunFam" id="1.20.5.440:FF:000001">
    <property type="entry name" value="ATP synthase epsilon chain"/>
    <property type="match status" value="1"/>
</dbReference>
<dbReference type="FunFam" id="2.60.15.10:FF:000001">
    <property type="entry name" value="ATP synthase epsilon chain"/>
    <property type="match status" value="1"/>
</dbReference>
<dbReference type="Gene3D" id="1.20.5.440">
    <property type="entry name" value="ATP synthase delta/epsilon subunit, C-terminal domain"/>
    <property type="match status" value="1"/>
</dbReference>
<dbReference type="Gene3D" id="2.60.15.10">
    <property type="entry name" value="F0F1 ATP synthase delta/epsilon subunit, N-terminal"/>
    <property type="match status" value="1"/>
</dbReference>
<dbReference type="HAMAP" id="MF_00530">
    <property type="entry name" value="ATP_synth_epsil_bac"/>
    <property type="match status" value="1"/>
</dbReference>
<dbReference type="InterPro" id="IPR036794">
    <property type="entry name" value="ATP_F1_dsu/esu_C_sf"/>
</dbReference>
<dbReference type="InterPro" id="IPR001469">
    <property type="entry name" value="ATP_synth_F1_dsu/esu"/>
</dbReference>
<dbReference type="InterPro" id="IPR020546">
    <property type="entry name" value="ATP_synth_F1_dsu/esu_N"/>
</dbReference>
<dbReference type="InterPro" id="IPR020547">
    <property type="entry name" value="ATP_synth_F1_esu_C"/>
</dbReference>
<dbReference type="InterPro" id="IPR036771">
    <property type="entry name" value="ATPsynth_dsu/esu_N"/>
</dbReference>
<dbReference type="NCBIfam" id="TIGR01216">
    <property type="entry name" value="ATP_synt_epsi"/>
    <property type="match status" value="1"/>
</dbReference>
<dbReference type="NCBIfam" id="NF001847">
    <property type="entry name" value="PRK00571.1-4"/>
    <property type="match status" value="1"/>
</dbReference>
<dbReference type="PANTHER" id="PTHR13822">
    <property type="entry name" value="ATP SYNTHASE DELTA/EPSILON CHAIN"/>
    <property type="match status" value="1"/>
</dbReference>
<dbReference type="PANTHER" id="PTHR13822:SF10">
    <property type="entry name" value="ATP SYNTHASE EPSILON CHAIN, CHLOROPLASTIC"/>
    <property type="match status" value="1"/>
</dbReference>
<dbReference type="Pfam" id="PF00401">
    <property type="entry name" value="ATP-synt_DE"/>
    <property type="match status" value="1"/>
</dbReference>
<dbReference type="Pfam" id="PF02823">
    <property type="entry name" value="ATP-synt_DE_N"/>
    <property type="match status" value="1"/>
</dbReference>
<dbReference type="SUPFAM" id="SSF46604">
    <property type="entry name" value="Epsilon subunit of F1F0-ATP synthase C-terminal domain"/>
    <property type="match status" value="1"/>
</dbReference>
<dbReference type="SUPFAM" id="SSF51344">
    <property type="entry name" value="Epsilon subunit of F1F0-ATP synthase N-terminal domain"/>
    <property type="match status" value="1"/>
</dbReference>
<name>ATPE_SHEPC</name>
<keyword id="KW-0066">ATP synthesis</keyword>
<keyword id="KW-0997">Cell inner membrane</keyword>
<keyword id="KW-1003">Cell membrane</keyword>
<keyword id="KW-0139">CF(1)</keyword>
<keyword id="KW-0375">Hydrogen ion transport</keyword>
<keyword id="KW-0406">Ion transport</keyword>
<keyword id="KW-0472">Membrane</keyword>
<keyword id="KW-0813">Transport</keyword>